<comment type="function">
    <text evidence="1 5 6 7 8">Intracellular cholesterol transporter which acts in concert with NPC1 and plays an important role in the egress of cholesterol from the lysosomal compartment (PubMed:12591949, PubMed:17018531, PubMed:21315718, PubMed:26296895). Unesterified cholesterol that has been released from LDLs in the lumen of the late endosomes/lysosomes is transferred by NPC2 to the cholesterol-binding pocket in the N-terminal domain of NPC1. May bind and mobilize cholesterol that is associated with membranes. NPC2 binds cholesterol with a 1:1 stoichiometry. Can bind a variety of sterols, including lathosterol, desmosterol and the plant sterols stigmasterol and beta-sitosterol (By similarity). The secreted form of NCP2 regulates biliary cholesterol secretion via stimulation of ABCG5/ABCG8-mediated cholesterol transport (PubMed:21315718).</text>
</comment>
<comment type="catalytic activity">
    <reaction evidence="8">
        <text>cholesterol(in) = cholesterol(out)</text>
        <dbReference type="Rhea" id="RHEA:39747"/>
        <dbReference type="ChEBI" id="CHEBI:16113"/>
    </reaction>
</comment>
<comment type="subunit">
    <text evidence="1">Interacts with NPC1 (via the second lumenal domain) in a cholestrol-dependent manner. Interacts with NUS1/NgBR, the interaction stabilizes NCP2 and regulates cholesterol trafficking. Interacts with DHDDS. Interacts with NEDD4L (via C2 domain). Interacts with NPC1L1.</text>
</comment>
<comment type="subcellular location">
    <subcellularLocation>
        <location evidence="4 5 7">Secreted</location>
    </subcellularLocation>
    <subcellularLocation>
        <location evidence="1">Endoplasmic reticulum</location>
    </subcellularLocation>
    <subcellularLocation>
        <location evidence="1">Lysosome</location>
    </subcellularLocation>
    <text evidence="11">Interaction with cell-surface M6PR mediates endocytosis and targeting to lysosomes.</text>
</comment>
<comment type="tissue specificity">
    <text evidence="4 7">Detected in liver and bile (PubMed:21315718). Detected in epididymis (at protein level). Detected in caput epididymis, corpus epididymis, cauda epididymis and ovary (PubMed:10863096).</text>
</comment>
<comment type="domain">
    <text evidence="2">Binds cholesterol in a hydrophobic pocket; there are no hydrogen bonds between the sterol and the protein.</text>
</comment>
<comment type="PTM">
    <text evidence="4">N-glycosylated.</text>
</comment>
<comment type="similarity">
    <text evidence="10">Belongs to the NPC2 family.</text>
</comment>
<dbReference type="EMBL" id="AB021289">
    <property type="protein sequence ID" value="BAA35183.1"/>
    <property type="molecule type" value="mRNA"/>
</dbReference>
<dbReference type="EMBL" id="AK008603">
    <property type="protein sequence ID" value="BAB25771.1"/>
    <property type="molecule type" value="mRNA"/>
</dbReference>
<dbReference type="EMBL" id="AK009127">
    <property type="protein sequence ID" value="BAB26090.1"/>
    <property type="molecule type" value="mRNA"/>
</dbReference>
<dbReference type="EMBL" id="AK151067">
    <property type="protein sequence ID" value="BAE30083.1"/>
    <property type="molecule type" value="mRNA"/>
</dbReference>
<dbReference type="EMBL" id="AK151133">
    <property type="protein sequence ID" value="BAE30141.1"/>
    <property type="molecule type" value="mRNA"/>
</dbReference>
<dbReference type="EMBL" id="AK153020">
    <property type="protein sequence ID" value="BAE31654.1"/>
    <property type="molecule type" value="mRNA"/>
</dbReference>
<dbReference type="EMBL" id="AK153203">
    <property type="protein sequence ID" value="BAE31803.1"/>
    <property type="molecule type" value="mRNA"/>
</dbReference>
<dbReference type="EMBL" id="AK158624">
    <property type="protein sequence ID" value="BAE34585.1"/>
    <property type="molecule type" value="mRNA"/>
</dbReference>
<dbReference type="EMBL" id="AK165263">
    <property type="protein sequence ID" value="BAE38111.1"/>
    <property type="molecule type" value="mRNA"/>
</dbReference>
<dbReference type="EMBL" id="AK167869">
    <property type="protein sequence ID" value="BAE39885.1"/>
    <property type="molecule type" value="mRNA"/>
</dbReference>
<dbReference type="EMBL" id="AK170327">
    <property type="protein sequence ID" value="BAE41721.1"/>
    <property type="molecule type" value="mRNA"/>
</dbReference>
<dbReference type="EMBL" id="BC003471">
    <property type="protein sequence ID" value="AAH03471.1"/>
    <property type="molecule type" value="mRNA"/>
</dbReference>
<dbReference type="EMBL" id="BC007190">
    <property type="protein sequence ID" value="AAH07190.1"/>
    <property type="molecule type" value="mRNA"/>
</dbReference>
<dbReference type="CCDS" id="CCDS26050.1"/>
<dbReference type="RefSeq" id="NP_075898.1">
    <property type="nucleotide sequence ID" value="NM_023409.4"/>
</dbReference>
<dbReference type="SMR" id="Q9Z0J0"/>
<dbReference type="BioGRID" id="212567">
    <property type="interactions" value="3"/>
</dbReference>
<dbReference type="FunCoup" id="Q9Z0J0">
    <property type="interactions" value="1375"/>
</dbReference>
<dbReference type="IntAct" id="Q9Z0J0">
    <property type="interactions" value="3"/>
</dbReference>
<dbReference type="MINT" id="Q9Z0J0"/>
<dbReference type="STRING" id="10090.ENSMUSP00000021668"/>
<dbReference type="SwissLipids" id="SLP:000000473"/>
<dbReference type="GlyCosmos" id="Q9Z0J0">
    <property type="glycosylation" value="2 sites, No reported glycans"/>
</dbReference>
<dbReference type="GlyGen" id="Q9Z0J0">
    <property type="glycosylation" value="4 sites, 3 N-linked glycans (3 sites)"/>
</dbReference>
<dbReference type="iPTMnet" id="Q9Z0J0"/>
<dbReference type="PhosphoSitePlus" id="Q9Z0J0"/>
<dbReference type="SwissPalm" id="Q9Z0J0"/>
<dbReference type="jPOST" id="Q9Z0J0"/>
<dbReference type="PaxDb" id="10090-ENSMUSP00000021668"/>
<dbReference type="PeptideAtlas" id="Q9Z0J0"/>
<dbReference type="ProteomicsDB" id="293878"/>
<dbReference type="Pumba" id="Q9Z0J0"/>
<dbReference type="Antibodypedia" id="88">
    <property type="antibodies" value="321 antibodies from 33 providers"/>
</dbReference>
<dbReference type="DNASU" id="67963"/>
<dbReference type="Ensembl" id="ENSMUST00000021668.10">
    <property type="protein sequence ID" value="ENSMUSP00000021668.9"/>
    <property type="gene ID" value="ENSMUSG00000021242.10"/>
</dbReference>
<dbReference type="GeneID" id="67963"/>
<dbReference type="KEGG" id="mmu:67963"/>
<dbReference type="UCSC" id="uc007oft.1">
    <property type="organism name" value="mouse"/>
</dbReference>
<dbReference type="AGR" id="MGI:1915213"/>
<dbReference type="CTD" id="10577"/>
<dbReference type="MGI" id="MGI:1915213">
    <property type="gene designation" value="Npc2"/>
</dbReference>
<dbReference type="VEuPathDB" id="HostDB:ENSMUSG00000021242"/>
<dbReference type="eggNOG" id="KOG4063">
    <property type="taxonomic scope" value="Eukaryota"/>
</dbReference>
<dbReference type="GeneTree" id="ENSGT00390000006223"/>
<dbReference type="HOGENOM" id="CLU_109192_1_0_1"/>
<dbReference type="InParanoid" id="Q9Z0J0"/>
<dbReference type="OMA" id="QNLFCWE"/>
<dbReference type="OrthoDB" id="6489092at2759"/>
<dbReference type="PhylomeDB" id="Q9Z0J0"/>
<dbReference type="TreeFam" id="TF317963"/>
<dbReference type="Reactome" id="R-MMU-6798695">
    <property type="pathway name" value="Neutrophil degranulation"/>
</dbReference>
<dbReference type="Reactome" id="R-MMU-8964038">
    <property type="pathway name" value="LDL clearance"/>
</dbReference>
<dbReference type="BioGRID-ORCS" id="67963">
    <property type="hits" value="7 hits in 78 CRISPR screens"/>
</dbReference>
<dbReference type="ChiTaRS" id="Npc2">
    <property type="organism name" value="mouse"/>
</dbReference>
<dbReference type="PRO" id="PR:Q9Z0J0"/>
<dbReference type="Proteomes" id="UP000000589">
    <property type="component" value="Chromosome 12"/>
</dbReference>
<dbReference type="RNAct" id="Q9Z0J0">
    <property type="molecule type" value="protein"/>
</dbReference>
<dbReference type="Bgee" id="ENSMUSG00000021242">
    <property type="expression patterns" value="Expressed in left lung lobe and 267 other cell types or tissues"/>
</dbReference>
<dbReference type="GO" id="GO:0005783">
    <property type="term" value="C:endoplasmic reticulum"/>
    <property type="evidence" value="ECO:0007669"/>
    <property type="project" value="UniProtKB-SubCell"/>
</dbReference>
<dbReference type="GO" id="GO:0005615">
    <property type="term" value="C:extracellular space"/>
    <property type="evidence" value="ECO:0007005"/>
    <property type="project" value="BHF-UCL"/>
</dbReference>
<dbReference type="GO" id="GO:0005764">
    <property type="term" value="C:lysosome"/>
    <property type="evidence" value="ECO:0000314"/>
    <property type="project" value="MGI"/>
</dbReference>
<dbReference type="GO" id="GO:0015485">
    <property type="term" value="F:cholesterol binding"/>
    <property type="evidence" value="ECO:0000315"/>
    <property type="project" value="UniProtKB"/>
</dbReference>
<dbReference type="GO" id="GO:0120020">
    <property type="term" value="F:cholesterol transfer activity"/>
    <property type="evidence" value="ECO:0007669"/>
    <property type="project" value="Ensembl"/>
</dbReference>
<dbReference type="GO" id="GO:0019899">
    <property type="term" value="F:enzyme binding"/>
    <property type="evidence" value="ECO:0007669"/>
    <property type="project" value="Ensembl"/>
</dbReference>
<dbReference type="GO" id="GO:0033344">
    <property type="term" value="P:cholesterol efflux"/>
    <property type="evidence" value="ECO:0000315"/>
    <property type="project" value="UniProtKB"/>
</dbReference>
<dbReference type="GO" id="GO:0042632">
    <property type="term" value="P:cholesterol homeostasis"/>
    <property type="evidence" value="ECO:0000250"/>
    <property type="project" value="HGNC-UCL"/>
</dbReference>
<dbReference type="GO" id="GO:0008203">
    <property type="term" value="P:cholesterol metabolic process"/>
    <property type="evidence" value="ECO:0007669"/>
    <property type="project" value="UniProtKB-KW"/>
</dbReference>
<dbReference type="GO" id="GO:0010878">
    <property type="term" value="P:cholesterol storage"/>
    <property type="evidence" value="ECO:0000315"/>
    <property type="project" value="MGI"/>
</dbReference>
<dbReference type="GO" id="GO:0030301">
    <property type="term" value="P:cholesterol transport"/>
    <property type="evidence" value="ECO:0000315"/>
    <property type="project" value="UniProtKB"/>
</dbReference>
<dbReference type="GO" id="GO:0010467">
    <property type="term" value="P:gene expression"/>
    <property type="evidence" value="ECO:0000315"/>
    <property type="project" value="MGI"/>
</dbReference>
<dbReference type="GO" id="GO:0032367">
    <property type="term" value="P:intracellular cholesterol transport"/>
    <property type="evidence" value="ECO:0000315"/>
    <property type="project" value="HGNC-UCL"/>
</dbReference>
<dbReference type="GO" id="GO:0032366">
    <property type="term" value="P:intracellular sterol transport"/>
    <property type="evidence" value="ECO:0000250"/>
    <property type="project" value="HGNC-UCL"/>
</dbReference>
<dbReference type="GO" id="GO:0009615">
    <property type="term" value="P:response to virus"/>
    <property type="evidence" value="ECO:0007669"/>
    <property type="project" value="Ensembl"/>
</dbReference>
<dbReference type="GO" id="GO:0016125">
    <property type="term" value="P:sterol metabolic process"/>
    <property type="evidence" value="ECO:0000315"/>
    <property type="project" value="MGI"/>
</dbReference>
<dbReference type="GO" id="GO:0015918">
    <property type="term" value="P:sterol transport"/>
    <property type="evidence" value="ECO:0000315"/>
    <property type="project" value="MGI"/>
</dbReference>
<dbReference type="CDD" id="cd00916">
    <property type="entry name" value="Npc2_like"/>
    <property type="match status" value="1"/>
</dbReference>
<dbReference type="FunFam" id="2.60.40.770:FF:000001">
    <property type="entry name" value="NPC intracellular cholesterol transporter 2"/>
    <property type="match status" value="1"/>
</dbReference>
<dbReference type="Gene3D" id="2.60.40.770">
    <property type="match status" value="1"/>
</dbReference>
<dbReference type="InterPro" id="IPR014756">
    <property type="entry name" value="Ig_E-set"/>
</dbReference>
<dbReference type="InterPro" id="IPR003172">
    <property type="entry name" value="ML_dom"/>
</dbReference>
<dbReference type="InterPro" id="IPR033916">
    <property type="entry name" value="ML_Npc2-like"/>
</dbReference>
<dbReference type="InterPro" id="IPR039670">
    <property type="entry name" value="NPC2-like"/>
</dbReference>
<dbReference type="PANTHER" id="PTHR11306">
    <property type="entry name" value="NIEMANN PICK TYPE C2 PROTEIN NPC2-RELATED"/>
    <property type="match status" value="1"/>
</dbReference>
<dbReference type="PANTHER" id="PTHR11306:SF68">
    <property type="entry name" value="NPC INTRACELLULAR CHOLESTEROL TRANSPORTER 2"/>
    <property type="match status" value="1"/>
</dbReference>
<dbReference type="Pfam" id="PF02221">
    <property type="entry name" value="E1_DerP2_DerF2"/>
    <property type="match status" value="1"/>
</dbReference>
<dbReference type="SMART" id="SM00737">
    <property type="entry name" value="ML"/>
    <property type="match status" value="1"/>
</dbReference>
<dbReference type="SUPFAM" id="SSF81296">
    <property type="entry name" value="E set domains"/>
    <property type="match status" value="1"/>
</dbReference>
<evidence type="ECO:0000250" key="1">
    <source>
        <dbReference type="UniProtKB" id="P61916"/>
    </source>
</evidence>
<evidence type="ECO:0000250" key="2">
    <source>
        <dbReference type="UniProtKB" id="P79345"/>
    </source>
</evidence>
<evidence type="ECO:0000255" key="3"/>
<evidence type="ECO:0000269" key="4">
    <source>
    </source>
</evidence>
<evidence type="ECO:0000269" key="5">
    <source>
    </source>
</evidence>
<evidence type="ECO:0000269" key="6">
    <source>
    </source>
</evidence>
<evidence type="ECO:0000269" key="7">
    <source>
    </source>
</evidence>
<evidence type="ECO:0000269" key="8">
    <source>
    </source>
</evidence>
<evidence type="ECO:0000303" key="9">
    <source>
    </source>
</evidence>
<evidence type="ECO:0000305" key="10"/>
<evidence type="ECO:0000305" key="11">
    <source>
    </source>
</evidence>
<evidence type="ECO:0000312" key="12">
    <source>
        <dbReference type="MGI" id="MGI:1915213"/>
    </source>
</evidence>
<evidence type="ECO:0007744" key="13">
    <source>
    </source>
</evidence>
<feature type="signal peptide" evidence="3">
    <location>
        <begin position="1"/>
        <end position="19"/>
    </location>
</feature>
<feature type="chain" id="PRO_0000019856" description="NPC intracellular cholesterol transporter 2">
    <location>
        <begin position="20"/>
        <end position="149"/>
    </location>
</feature>
<feature type="modified residue" description="N6-acetyllysine" evidence="13">
    <location>
        <position position="116"/>
    </location>
</feature>
<feature type="glycosylation site" description="N-linked (GlcNAc...) asparagine" evidence="3">
    <location>
        <position position="58"/>
    </location>
</feature>
<feature type="glycosylation site" description="N-linked (GlcNAc...) asparagine" evidence="3">
    <location>
        <position position="69"/>
    </location>
</feature>
<feature type="disulfide bond" evidence="1">
    <location>
        <begin position="27"/>
        <end position="140"/>
    </location>
</feature>
<feature type="disulfide bond" evidence="1">
    <location>
        <begin position="42"/>
        <end position="47"/>
    </location>
</feature>
<feature type="disulfide bond" evidence="1">
    <location>
        <begin position="93"/>
        <end position="99"/>
    </location>
</feature>
<feature type="mutagenesis site" description="Strongly decreased cholesterol export." evidence="8">
    <original>Q</original>
    <variation>A</variation>
    <location>
        <position position="48"/>
    </location>
</feature>
<feature type="mutagenesis site" description="Strongly decreased cholesterol export." evidence="8">
    <original>H</original>
    <variation>A</variation>
    <location>
        <position position="50"/>
    </location>
</feature>
<feature type="mutagenesis site" description="Decreased cholesterol binding. Strongly decreased cholesterol transport activity." evidence="5 8">
    <original>K</original>
    <variation>A</variation>
    <location>
        <position position="51"/>
    </location>
</feature>
<feature type="mutagenesis site" description="Decreased cholesterol binding. Strongly decreased cholesterol transport activity." evidence="8">
    <original>N</original>
    <variation>A</variation>
    <location>
        <position position="58"/>
    </location>
</feature>
<feature type="mutagenesis site" description="No effect on cholesterol binding. Strongly decreased cholesterol transport activity." evidence="8">
    <original>I</original>
    <variation>D</variation>
    <location>
        <position position="81"/>
    </location>
</feature>
<feature type="mutagenesis site" description="No effect on cholesterol binding. Strongly decreased cholesterol transport activity." evidence="8">
    <original>V</original>
    <variation>A</variation>
    <location>
        <position position="83"/>
    </location>
</feature>
<feature type="mutagenesis site" description="Loss of cholesterol binding. Abolishes cholesterol transport activity." evidence="5">
    <original>F</original>
    <variation>A</variation>
    <location>
        <position position="85"/>
    </location>
</feature>
<feature type="mutagenesis site" description="Decreased cholesterol binding. Nearly abolishes cholesterol transport activity." evidence="5 8">
    <original>D</original>
    <variation>A</variation>
    <location>
        <position position="91"/>
    </location>
</feature>
<feature type="mutagenesis site" description="No significant effect on biliary cholesterol secretion." evidence="7">
    <original>D</original>
    <variation>A</variation>
    <location>
        <position position="91"/>
    </location>
</feature>
<feature type="mutagenesis site" description="Decreased cholesterol binding. Nearly abolishes cholesterol transport activity." evidence="5 8">
    <original>K</original>
    <variation>A</variation>
    <location>
        <position position="94"/>
    </location>
</feature>
<feature type="mutagenesis site" description="Decreased cholesterol binding. Strongly decreased cholesterol transport activity." evidence="8">
    <original>D</original>
    <variation>A</variation>
    <location>
        <position position="104"/>
    </location>
</feature>
<feature type="mutagenesis site" description="Loss of cholesterol binding. Abolishes cholesterol transport activity. Abolishes stimulation of biliary cholesterol secretion." evidence="5 7">
    <original>V</original>
    <variation>F</variation>
    <location>
        <position position="115"/>
    </location>
</feature>
<feature type="mutagenesis site" description="Loss of cholesterol binding. Abolishes cholesterol transport activity." evidence="5">
    <original>Y</original>
    <variation>A</variation>
    <location>
        <position position="119"/>
    </location>
</feature>
<feature type="mutagenesis site" description="Strongly decreased cholesterol export." evidence="8">
    <original>E</original>
    <variation>A</variation>
    <location>
        <position position="127"/>
    </location>
</feature>
<feature type="mutagenesis site" description="No effect on cholesterol binding. Strongly decreased cholesterol transport activity." evidence="8">
    <original>D</original>
    <variation>A</variation>
    <location>
        <position position="132"/>
    </location>
</feature>
<feature type="mutagenesis site" description="No effect on cholesterol binding. Strongly decreased cholesterol transport activity." evidence="8">
    <original>K</original>
    <variation>A</variation>
    <location>
        <position position="134"/>
    </location>
</feature>
<proteinExistence type="evidence at protein level"/>
<keyword id="KW-0007">Acetylation</keyword>
<keyword id="KW-0153">Cholesterol metabolism</keyword>
<keyword id="KW-1015">Disulfide bond</keyword>
<keyword id="KW-0256">Endoplasmic reticulum</keyword>
<keyword id="KW-0325">Glycoprotein</keyword>
<keyword id="KW-0443">Lipid metabolism</keyword>
<keyword id="KW-0445">Lipid transport</keyword>
<keyword id="KW-0458">Lysosome</keyword>
<keyword id="KW-1185">Reference proteome</keyword>
<keyword id="KW-0964">Secreted</keyword>
<keyword id="KW-0732">Signal</keyword>
<keyword id="KW-0753">Steroid metabolism</keyword>
<keyword id="KW-1207">Sterol metabolism</keyword>
<keyword id="KW-0813">Transport</keyword>
<gene>
    <name evidence="12" type="primary">Npc2</name>
</gene>
<name>NPC2_MOUSE</name>
<accession>Q9Z0J0</accession>
<accession>Q3UB23</accession>
<protein>
    <recommendedName>
        <fullName evidence="12">NPC intracellular cholesterol transporter 2</fullName>
    </recommendedName>
    <alternativeName>
        <fullName>Epididymal secretory protein E1</fullName>
        <shortName evidence="9">mE1</shortName>
    </alternativeName>
    <alternativeName>
        <fullName>Niemann Pick type C2 protein homolog</fullName>
    </alternativeName>
</protein>
<organism>
    <name type="scientific">Mus musculus</name>
    <name type="common">Mouse</name>
    <dbReference type="NCBI Taxonomy" id="10090"/>
    <lineage>
        <taxon>Eukaryota</taxon>
        <taxon>Metazoa</taxon>
        <taxon>Chordata</taxon>
        <taxon>Craniata</taxon>
        <taxon>Vertebrata</taxon>
        <taxon>Euteleostomi</taxon>
        <taxon>Mammalia</taxon>
        <taxon>Eutheria</taxon>
        <taxon>Euarchontoglires</taxon>
        <taxon>Glires</taxon>
        <taxon>Rodentia</taxon>
        <taxon>Myomorpha</taxon>
        <taxon>Muroidea</taxon>
        <taxon>Muridae</taxon>
        <taxon>Murinae</taxon>
        <taxon>Mus</taxon>
        <taxon>Mus</taxon>
    </lineage>
</organism>
<sequence length="149" mass="16442">MRFLAATILLLALVAASQAEPLHFKDCGSKVGVIKEVNVSPCPTDPCQLHKGQSYSVNITFTSGTQSQNSTALVHGILEGIRVPFPIPEPDGCKSGINCPIQKDKVYSYLNKLPVKNEYPSIKLVVEWKLEDDKKNNLFCWEIPVQITS</sequence>
<reference key="1">
    <citation type="journal article" date="2000" name="Gene">
        <title>Primary structure, genomic organization and expression of the major secretory protein of murine epididymis, ME1.</title>
        <authorList>
            <person name="Nakamura Y."/>
            <person name="Takayama N."/>
            <person name="Minamitani T."/>
            <person name="Ikuta T."/>
            <person name="Ariga H."/>
            <person name="Matsumoto K."/>
        </authorList>
    </citation>
    <scope>NUCLEOTIDE SEQUENCE [MRNA]</scope>
    <scope>SUBCELLULAR LOCATION</scope>
    <scope>GLYCOSYLATION</scope>
    <scope>TISSUE SPECIFICITY</scope>
    <source>
        <tissue>Embryo</tissue>
    </source>
</reference>
<reference key="2">
    <citation type="journal article" date="2005" name="Science">
        <title>The transcriptional landscape of the mammalian genome.</title>
        <authorList>
            <person name="Carninci P."/>
            <person name="Kasukawa T."/>
            <person name="Katayama S."/>
            <person name="Gough J."/>
            <person name="Frith M.C."/>
            <person name="Maeda N."/>
            <person name="Oyama R."/>
            <person name="Ravasi T."/>
            <person name="Lenhard B."/>
            <person name="Wells C."/>
            <person name="Kodzius R."/>
            <person name="Shimokawa K."/>
            <person name="Bajic V.B."/>
            <person name="Brenner S.E."/>
            <person name="Batalov S."/>
            <person name="Forrest A.R."/>
            <person name="Zavolan M."/>
            <person name="Davis M.J."/>
            <person name="Wilming L.G."/>
            <person name="Aidinis V."/>
            <person name="Allen J.E."/>
            <person name="Ambesi-Impiombato A."/>
            <person name="Apweiler R."/>
            <person name="Aturaliya R.N."/>
            <person name="Bailey T.L."/>
            <person name="Bansal M."/>
            <person name="Baxter L."/>
            <person name="Beisel K.W."/>
            <person name="Bersano T."/>
            <person name="Bono H."/>
            <person name="Chalk A.M."/>
            <person name="Chiu K.P."/>
            <person name="Choudhary V."/>
            <person name="Christoffels A."/>
            <person name="Clutterbuck D.R."/>
            <person name="Crowe M.L."/>
            <person name="Dalla E."/>
            <person name="Dalrymple B.P."/>
            <person name="de Bono B."/>
            <person name="Della Gatta G."/>
            <person name="di Bernardo D."/>
            <person name="Down T."/>
            <person name="Engstrom P."/>
            <person name="Fagiolini M."/>
            <person name="Faulkner G."/>
            <person name="Fletcher C.F."/>
            <person name="Fukushima T."/>
            <person name="Furuno M."/>
            <person name="Futaki S."/>
            <person name="Gariboldi M."/>
            <person name="Georgii-Hemming P."/>
            <person name="Gingeras T.R."/>
            <person name="Gojobori T."/>
            <person name="Green R.E."/>
            <person name="Gustincich S."/>
            <person name="Harbers M."/>
            <person name="Hayashi Y."/>
            <person name="Hensch T.K."/>
            <person name="Hirokawa N."/>
            <person name="Hill D."/>
            <person name="Huminiecki L."/>
            <person name="Iacono M."/>
            <person name="Ikeo K."/>
            <person name="Iwama A."/>
            <person name="Ishikawa T."/>
            <person name="Jakt M."/>
            <person name="Kanapin A."/>
            <person name="Katoh M."/>
            <person name="Kawasawa Y."/>
            <person name="Kelso J."/>
            <person name="Kitamura H."/>
            <person name="Kitano H."/>
            <person name="Kollias G."/>
            <person name="Krishnan S.P."/>
            <person name="Kruger A."/>
            <person name="Kummerfeld S.K."/>
            <person name="Kurochkin I.V."/>
            <person name="Lareau L.F."/>
            <person name="Lazarevic D."/>
            <person name="Lipovich L."/>
            <person name="Liu J."/>
            <person name="Liuni S."/>
            <person name="McWilliam S."/>
            <person name="Madan Babu M."/>
            <person name="Madera M."/>
            <person name="Marchionni L."/>
            <person name="Matsuda H."/>
            <person name="Matsuzawa S."/>
            <person name="Miki H."/>
            <person name="Mignone F."/>
            <person name="Miyake S."/>
            <person name="Morris K."/>
            <person name="Mottagui-Tabar S."/>
            <person name="Mulder N."/>
            <person name="Nakano N."/>
            <person name="Nakauchi H."/>
            <person name="Ng P."/>
            <person name="Nilsson R."/>
            <person name="Nishiguchi S."/>
            <person name="Nishikawa S."/>
            <person name="Nori F."/>
            <person name="Ohara O."/>
            <person name="Okazaki Y."/>
            <person name="Orlando V."/>
            <person name="Pang K.C."/>
            <person name="Pavan W.J."/>
            <person name="Pavesi G."/>
            <person name="Pesole G."/>
            <person name="Petrovsky N."/>
            <person name="Piazza S."/>
            <person name="Reed J."/>
            <person name="Reid J.F."/>
            <person name="Ring B.Z."/>
            <person name="Ringwald M."/>
            <person name="Rost B."/>
            <person name="Ruan Y."/>
            <person name="Salzberg S.L."/>
            <person name="Sandelin A."/>
            <person name="Schneider C."/>
            <person name="Schoenbach C."/>
            <person name="Sekiguchi K."/>
            <person name="Semple C.A."/>
            <person name="Seno S."/>
            <person name="Sessa L."/>
            <person name="Sheng Y."/>
            <person name="Shibata Y."/>
            <person name="Shimada H."/>
            <person name="Shimada K."/>
            <person name="Silva D."/>
            <person name="Sinclair B."/>
            <person name="Sperling S."/>
            <person name="Stupka E."/>
            <person name="Sugiura K."/>
            <person name="Sultana R."/>
            <person name="Takenaka Y."/>
            <person name="Taki K."/>
            <person name="Tammoja K."/>
            <person name="Tan S.L."/>
            <person name="Tang S."/>
            <person name="Taylor M.S."/>
            <person name="Tegner J."/>
            <person name="Teichmann S.A."/>
            <person name="Ueda H.R."/>
            <person name="van Nimwegen E."/>
            <person name="Verardo R."/>
            <person name="Wei C.L."/>
            <person name="Yagi K."/>
            <person name="Yamanishi H."/>
            <person name="Zabarovsky E."/>
            <person name="Zhu S."/>
            <person name="Zimmer A."/>
            <person name="Hide W."/>
            <person name="Bult C."/>
            <person name="Grimmond S.M."/>
            <person name="Teasdale R.D."/>
            <person name="Liu E.T."/>
            <person name="Brusic V."/>
            <person name="Quackenbush J."/>
            <person name="Wahlestedt C."/>
            <person name="Mattick J.S."/>
            <person name="Hume D.A."/>
            <person name="Kai C."/>
            <person name="Sasaki D."/>
            <person name="Tomaru Y."/>
            <person name="Fukuda S."/>
            <person name="Kanamori-Katayama M."/>
            <person name="Suzuki M."/>
            <person name="Aoki J."/>
            <person name="Arakawa T."/>
            <person name="Iida J."/>
            <person name="Imamura K."/>
            <person name="Itoh M."/>
            <person name="Kato T."/>
            <person name="Kawaji H."/>
            <person name="Kawagashira N."/>
            <person name="Kawashima T."/>
            <person name="Kojima M."/>
            <person name="Kondo S."/>
            <person name="Konno H."/>
            <person name="Nakano K."/>
            <person name="Ninomiya N."/>
            <person name="Nishio T."/>
            <person name="Okada M."/>
            <person name="Plessy C."/>
            <person name="Shibata K."/>
            <person name="Shiraki T."/>
            <person name="Suzuki S."/>
            <person name="Tagami M."/>
            <person name="Waki K."/>
            <person name="Watahiki A."/>
            <person name="Okamura-Oho Y."/>
            <person name="Suzuki H."/>
            <person name="Kawai J."/>
            <person name="Hayashizaki Y."/>
        </authorList>
    </citation>
    <scope>NUCLEOTIDE SEQUENCE [LARGE SCALE MRNA]</scope>
    <source>
        <strain>BALB/cJ</strain>
        <strain>C57BL/6J</strain>
        <strain>NOD</strain>
        <tissue>Bone marrow</tissue>
        <tissue>Small intestine</tissue>
        <tissue>Spleen</tissue>
        <tissue>Tongue</tissue>
        <tissue>Visual cortex</tissue>
    </source>
</reference>
<reference key="3">
    <citation type="journal article" date="2004" name="Genome Res.">
        <title>The status, quality, and expansion of the NIH full-length cDNA project: the Mammalian Gene Collection (MGC).</title>
        <authorList>
            <consortium name="The MGC Project Team"/>
        </authorList>
    </citation>
    <scope>NUCLEOTIDE SEQUENCE [LARGE SCALE MRNA]</scope>
    <source>
        <strain>FVB/N</strain>
        <tissue>Mammary gland</tissue>
    </source>
</reference>
<reference key="4">
    <citation type="journal article" date="2003" name="Proc. Natl. Acad. Sci. U.S.A.">
        <title>The integrity of a cholesterol-binding pocket in Niemann-Pick C2 protein is necessary to control lysosome cholesterol levels.</title>
        <authorList>
            <person name="Ko D.C."/>
            <person name="Binkley J."/>
            <person name="Sidow A."/>
            <person name="Scott M.P."/>
        </authorList>
    </citation>
    <scope>FUNCTION</scope>
    <scope>SUBCELLULAR LOCATION</scope>
    <scope>MUTAGENESIS OF LYS-51; PHE-85; ASP-91; LYS-94; VAL-115 AND TYR-119</scope>
</reference>
<reference key="5">
    <citation type="journal article" date="2006" name="J. Biol. Chem.">
        <title>NPC2, the protein deficient in Niemann-Pick C2 disease, consists of multiple glycoforms that bind a variety of sterols.</title>
        <authorList>
            <person name="Liou H.L."/>
            <person name="Dixit S.S."/>
            <person name="Xu S."/>
            <person name="Tint G.S."/>
            <person name="Stock A.M."/>
            <person name="Lobel P."/>
        </authorList>
    </citation>
    <scope>FUNCTION</scope>
</reference>
<reference key="6">
    <citation type="journal article" date="2010" name="Cell">
        <title>A tissue-specific atlas of mouse protein phosphorylation and expression.</title>
        <authorList>
            <person name="Huttlin E.L."/>
            <person name="Jedrychowski M.P."/>
            <person name="Elias J.E."/>
            <person name="Goswami T."/>
            <person name="Rad R."/>
            <person name="Beausoleil S.A."/>
            <person name="Villen J."/>
            <person name="Haas W."/>
            <person name="Sowa M.E."/>
            <person name="Gygi S.P."/>
        </authorList>
    </citation>
    <scope>IDENTIFICATION BY MASS SPECTROMETRY [LARGE SCALE ANALYSIS]</scope>
    <source>
        <tissue>Brain</tissue>
        <tissue>Brown adipose tissue</tissue>
        <tissue>Kidney</tissue>
        <tissue>Liver</tissue>
        <tissue>Lung</tissue>
        <tissue>Pancreas</tissue>
        <tissue>Spleen</tissue>
        <tissue>Testis</tissue>
    </source>
</reference>
<reference key="7">
    <citation type="journal article" date="2011" name="Gastroenterology">
        <title>NPC2 regulates biliary cholesterol secretion via stimulation of ABCG5/G8-mediated cholesterol transport.</title>
        <authorList>
            <person name="Yamanashi Y."/>
            <person name="Takada T."/>
            <person name="Yoshikado T."/>
            <person name="Shoda J."/>
            <person name="Suzuki H."/>
        </authorList>
    </citation>
    <scope>FUNCTION</scope>
    <scope>TISSUE SPECIFICITY</scope>
    <scope>SUBCELLULAR LOCATION</scope>
    <scope>MUTAGENESIS OF ASP-91 AND VAL-115</scope>
</reference>
<reference key="8">
    <citation type="journal article" date="2009" name="Biochim. Biophys. Acta">
        <title>Niemann-Pick C2 (NPC2) and intracellular cholesterol trafficking.</title>
        <authorList>
            <person name="Storch J."/>
            <person name="Xu Z."/>
        </authorList>
    </citation>
    <scope>REVIEW ON FUNCTION</scope>
</reference>
<reference key="9">
    <citation type="journal article" date="2011" name="Curr. Opin. Lipidol.">
        <title>Function of the Niemann-Pick type C proteins and their bypass by cyclodextrin.</title>
        <authorList>
            <person name="Vance J.E."/>
            <person name="Peake K.B."/>
        </authorList>
    </citation>
    <scope>REVIEW ON FUNCTION</scope>
</reference>
<reference key="10">
    <citation type="journal article" date="2013" name="Mol. Cell">
        <title>SIRT5-mediated lysine desuccinylation impacts diverse metabolic pathways.</title>
        <authorList>
            <person name="Park J."/>
            <person name="Chen Y."/>
            <person name="Tishkoff D.X."/>
            <person name="Peng C."/>
            <person name="Tan M."/>
            <person name="Dai L."/>
            <person name="Xie Z."/>
            <person name="Zhang Y."/>
            <person name="Zwaans B.M."/>
            <person name="Skinner M.E."/>
            <person name="Lombard D.B."/>
            <person name="Zhao Y."/>
        </authorList>
    </citation>
    <scope>ACETYLATION [LARGE SCALE ANALYSIS] AT LYS-116</scope>
    <scope>IDENTIFICATION BY MASS SPECTROMETRY [LARGE SCALE ANALYSIS]</scope>
    <source>
        <tissue>Embryonic fibroblast</tissue>
    </source>
</reference>
<reference key="11">
    <citation type="journal article" date="2015" name="J. Biol. Chem.">
        <title>Multiple Surface Regions on the Niemann-Pick C2 Protein Facilitate Intracellular Cholesterol Transport.</title>
        <authorList>
            <person name="McCauliff L.A."/>
            <person name="Xu Z."/>
            <person name="Li R."/>
            <person name="Kodukula S."/>
            <person name="Ko D.C."/>
            <person name="Scott M.P."/>
            <person name="Kahn P.C."/>
            <person name="Storch J."/>
        </authorList>
    </citation>
    <scope>FUNCTION</scope>
    <scope>MUTAGENESIS OF GLN-48; HIS-50; LYS-51; ASN-58; ILE-81; VAL-83; ASP-91; LYS-94; ASP-104; GLU-127; ASP-132 AND LYS-134</scope>
</reference>